<keyword id="KW-0004">4Fe-4S</keyword>
<keyword id="KW-0408">Iron</keyword>
<keyword id="KW-0411">Iron-sulfur</keyword>
<keyword id="KW-0479">Metal-binding</keyword>
<keyword id="KW-0614">Plasmid</keyword>
<keyword id="KW-1185">Reference proteome</keyword>
<comment type="function">
    <text evidence="1">Involved in the maturation of [NiFe] hydrogenases. Involved in the biosynthesis of the Fe(CN)(2)CO cofactor.</text>
</comment>
<comment type="cofactor">
    <cofactor evidence="1">
        <name>[4Fe-4S] cluster</name>
        <dbReference type="ChEBI" id="CHEBI:49883"/>
    </cofactor>
</comment>
<comment type="pathway">
    <text evidence="1">Protein modification; [NiFe] hydrogenase maturation.</text>
</comment>
<comment type="similarity">
    <text evidence="2">Belongs to the HypD family.</text>
</comment>
<feature type="chain" id="PRO_0000201446" description="Hydrogenase maturation factor HypD">
    <location>
        <begin position="1"/>
        <end position="379"/>
    </location>
</feature>
<feature type="binding site" evidence="1">
    <location>
        <position position="36"/>
    </location>
    <ligand>
        <name>Fe cation</name>
        <dbReference type="ChEBI" id="CHEBI:24875"/>
    </ligand>
</feature>
<feature type="binding site" evidence="1">
    <location>
        <position position="64"/>
    </location>
    <ligand>
        <name>Fe cation</name>
        <dbReference type="ChEBI" id="CHEBI:24875"/>
    </ligand>
</feature>
<feature type="binding site" evidence="1">
    <location>
        <position position="67"/>
    </location>
    <ligand>
        <name>Fe cation</name>
        <dbReference type="ChEBI" id="CHEBI:24875"/>
    </ligand>
</feature>
<name>HYPD_CUPNH</name>
<proteinExistence type="inferred from homology"/>
<sequence length="379" mass="41907">MKYIEEFRDGELAQRIAAHVRAEARPGQRYNFMEFCGGHTHAISRYGVTELLPENVRMIHGPGCPVCVLPIGRIDLALHLALERDAIVCTYGDTMRVPASGGMSLIRAKAHGADIRMVYSAADALKIAQRHPQREVVFLAIGFETTTPPTALIIREAKARQVDNFSVLCCHVLTPSAITHILESPEVRDYGTVPIDGFVGPAHVSIVIGTRPYEHFSREYGKPVVIAGFEPLDVMQAILMLVRQVNSGRAEVENEFVRAVTRDGNESAQAMVSEVFELRPSFEWRGLGEVPYSALRIRAQFARFDAEQRFDLRYRPVPDNKACECGAILRGVKKPTDCKLFATVCTPENPMGSCMVSSEGACAAHYSYGRFKDIPLVAA</sequence>
<gene>
    <name type="primary">hypD</name>
    <name type="ordered locus">PHG016</name>
</gene>
<dbReference type="EMBL" id="X70183">
    <property type="protein sequence ID" value="CAA49734.1"/>
    <property type="molecule type" value="Genomic_DNA"/>
</dbReference>
<dbReference type="EMBL" id="AY305378">
    <property type="protein sequence ID" value="AAP85772.1"/>
    <property type="molecule type" value="Genomic_DNA"/>
</dbReference>
<dbReference type="PIR" id="S29978">
    <property type="entry name" value="S29978"/>
</dbReference>
<dbReference type="RefSeq" id="WP_011153941.1">
    <property type="nucleotide sequence ID" value="NC_005241.1"/>
</dbReference>
<dbReference type="SMR" id="P31903"/>
<dbReference type="IntAct" id="P31903">
    <property type="interactions" value="2"/>
</dbReference>
<dbReference type="KEGG" id="reh:PHG016"/>
<dbReference type="PATRIC" id="fig|381666.6.peg.12"/>
<dbReference type="eggNOG" id="COG0409">
    <property type="taxonomic scope" value="Bacteria"/>
</dbReference>
<dbReference type="HOGENOM" id="CLU_048562_1_0_4"/>
<dbReference type="OrthoDB" id="9770424at2"/>
<dbReference type="UniPathway" id="UPA00335"/>
<dbReference type="Proteomes" id="UP000008210">
    <property type="component" value="Plasmid megaplasmid pHG1"/>
</dbReference>
<dbReference type="GO" id="GO:0051539">
    <property type="term" value="F:4 iron, 4 sulfur cluster binding"/>
    <property type="evidence" value="ECO:0007669"/>
    <property type="project" value="UniProtKB-KW"/>
</dbReference>
<dbReference type="GO" id="GO:0070025">
    <property type="term" value="F:carbon monoxide binding"/>
    <property type="evidence" value="ECO:0007669"/>
    <property type="project" value="TreeGrafter"/>
</dbReference>
<dbReference type="GO" id="GO:0005506">
    <property type="term" value="F:iron ion binding"/>
    <property type="evidence" value="ECO:0007669"/>
    <property type="project" value="TreeGrafter"/>
</dbReference>
<dbReference type="GO" id="GO:0051604">
    <property type="term" value="P:protein maturation"/>
    <property type="evidence" value="ECO:0007669"/>
    <property type="project" value="TreeGrafter"/>
</dbReference>
<dbReference type="Gene3D" id="6.10.20.100">
    <property type="match status" value="1"/>
</dbReference>
<dbReference type="Gene3D" id="3.40.50.11740">
    <property type="entry name" value="HypD, alpha/beta domain 2"/>
    <property type="match status" value="2"/>
</dbReference>
<dbReference type="InterPro" id="IPR002780">
    <property type="entry name" value="Hyd_form_HypD"/>
</dbReference>
<dbReference type="InterPro" id="IPR042243">
    <property type="entry name" value="HypD_1"/>
</dbReference>
<dbReference type="InterPro" id="IPR042244">
    <property type="entry name" value="HypD_2_sf"/>
</dbReference>
<dbReference type="NCBIfam" id="TIGR00075">
    <property type="entry name" value="hypD"/>
    <property type="match status" value="1"/>
</dbReference>
<dbReference type="PANTHER" id="PTHR30149:SF0">
    <property type="entry name" value="HYDROGENASE MATURATION FACTOR HYPD"/>
    <property type="match status" value="1"/>
</dbReference>
<dbReference type="PANTHER" id="PTHR30149">
    <property type="entry name" value="HYDROGENASE PROTEIN ASSEMBLY PROTEIN HYPD"/>
    <property type="match status" value="1"/>
</dbReference>
<dbReference type="Pfam" id="PF01924">
    <property type="entry name" value="HypD"/>
    <property type="match status" value="1"/>
</dbReference>
<dbReference type="PIRSF" id="PIRSF005622">
    <property type="entry name" value="Hydrgn_mat_hypD"/>
    <property type="match status" value="1"/>
</dbReference>
<accession>P31903</accession>
<organism>
    <name type="scientific">Cupriavidus necator (strain ATCC 17699 / DSM 428 / KCTC 22496 / NCIMB 10442 / H16 / Stanier 337)</name>
    <name type="common">Ralstonia eutropha</name>
    <dbReference type="NCBI Taxonomy" id="381666"/>
    <lineage>
        <taxon>Bacteria</taxon>
        <taxon>Pseudomonadati</taxon>
        <taxon>Pseudomonadota</taxon>
        <taxon>Betaproteobacteria</taxon>
        <taxon>Burkholderiales</taxon>
        <taxon>Burkholderiaceae</taxon>
        <taxon>Cupriavidus</taxon>
    </lineage>
</organism>
<protein>
    <recommendedName>
        <fullName evidence="1">Hydrogenase maturation factor HypD</fullName>
    </recommendedName>
</protein>
<reference key="1">
    <citation type="journal article" date="1993" name="Arch. Microbiol.">
        <title>Analysis of a pleiotropic gene region involved in formation of catalytically active hydrogenases in Alcaligenes eutrophus H16.</title>
        <authorList>
            <person name="Dernedde J."/>
            <person name="Eitinger M."/>
            <person name="Friedrich B."/>
        </authorList>
    </citation>
    <scope>NUCLEOTIDE SEQUENCE [GENOMIC DNA]</scope>
</reference>
<reference key="2">
    <citation type="journal article" date="2003" name="J. Mol. Biol.">
        <title>Complete nucleotide sequence of pHG1: a Ralstonia eutropha H16 megaplasmid encoding key enzymes of H(2)-based lithoautotrophy and anaerobiosis.</title>
        <authorList>
            <person name="Schwartz E."/>
            <person name="Henne A."/>
            <person name="Cramm R."/>
            <person name="Eitinger T."/>
            <person name="Friedrich B."/>
            <person name="Gottschalk G."/>
        </authorList>
    </citation>
    <scope>NUCLEOTIDE SEQUENCE [LARGE SCALE GENOMIC DNA]</scope>
    <source>
        <strain>ATCC 17699 / DSM 428 / KCTC 22496 / NCIMB 10442 / H16 / Stanier 337</strain>
    </source>
</reference>
<geneLocation type="plasmid">
    <name>megaplasmid pHG1</name>
</geneLocation>
<evidence type="ECO:0000250" key="1">
    <source>
        <dbReference type="UniProtKB" id="P24192"/>
    </source>
</evidence>
<evidence type="ECO:0000305" key="2"/>